<comment type="function">
    <text evidence="1">Component of the cytochrome b6-f complex, which mediates electron transfer between photosystem II (PSII) and photosystem I (PSI), cyclic electron flow around PSI, and state transitions.</text>
</comment>
<comment type="cofactor">
    <cofactor evidence="1">
        <name>heme b</name>
        <dbReference type="ChEBI" id="CHEBI:60344"/>
    </cofactor>
    <text evidence="1">Binds 2 heme b groups non-covalently with two histidine residues as axial ligands.</text>
</comment>
<comment type="cofactor">
    <cofactor evidence="1">
        <name>heme c</name>
        <dbReference type="ChEBI" id="CHEBI:61717"/>
    </cofactor>
    <text evidence="1">Binds one heme group covalently by a single cysteine link with no axial amino acid ligand. This heme was named heme ci.</text>
</comment>
<comment type="subunit">
    <text evidence="1">The 4 large subunits of the cytochrome b6-f complex are cytochrome b6, subunit IV (17 kDa polypeptide, PetD), cytochrome f and the Rieske protein, while the 4 small subunits are PetG, PetL, PetM and PetN. The complex functions as a dimer.</text>
</comment>
<comment type="subcellular location">
    <subcellularLocation>
        <location evidence="1">Plastid</location>
        <location evidence="1">Chloroplast thylakoid membrane</location>
        <topology evidence="1">Multi-pass membrane protein</topology>
    </subcellularLocation>
</comment>
<comment type="miscellaneous">
    <text evidence="1">Heme 1 (or BH or b566) is high-potential and absorbs at about 566 nm, and heme 2 (or BL or b562) is low-potential and absorbs at about 562 nm.</text>
</comment>
<comment type="similarity">
    <text evidence="1">Belongs to the cytochrome b family. PetB subfamily.</text>
</comment>
<dbReference type="EMBL" id="AP002983">
    <property type="protein sequence ID" value="BAB33226.1"/>
    <property type="molecule type" value="Genomic_DNA"/>
</dbReference>
<dbReference type="RefSeq" id="NP_084827.1">
    <property type="nucleotide sequence ID" value="NC_002694.1"/>
</dbReference>
<dbReference type="SMR" id="Q9BBQ6"/>
<dbReference type="GeneID" id="802872"/>
<dbReference type="GO" id="GO:0009535">
    <property type="term" value="C:chloroplast thylakoid membrane"/>
    <property type="evidence" value="ECO:0007669"/>
    <property type="project" value="UniProtKB-SubCell"/>
</dbReference>
<dbReference type="GO" id="GO:0045158">
    <property type="term" value="F:electron transporter, transferring electrons within cytochrome b6/f complex of photosystem II activity"/>
    <property type="evidence" value="ECO:0007669"/>
    <property type="project" value="UniProtKB-UniRule"/>
</dbReference>
<dbReference type="GO" id="GO:0046872">
    <property type="term" value="F:metal ion binding"/>
    <property type="evidence" value="ECO:0007669"/>
    <property type="project" value="UniProtKB-KW"/>
</dbReference>
<dbReference type="GO" id="GO:0016491">
    <property type="term" value="F:oxidoreductase activity"/>
    <property type="evidence" value="ECO:0007669"/>
    <property type="project" value="InterPro"/>
</dbReference>
<dbReference type="GO" id="GO:0015979">
    <property type="term" value="P:photosynthesis"/>
    <property type="evidence" value="ECO:0007669"/>
    <property type="project" value="UniProtKB-UniRule"/>
</dbReference>
<dbReference type="GO" id="GO:0022904">
    <property type="term" value="P:respiratory electron transport chain"/>
    <property type="evidence" value="ECO:0007669"/>
    <property type="project" value="InterPro"/>
</dbReference>
<dbReference type="CDD" id="cd00284">
    <property type="entry name" value="Cytochrome_b_N"/>
    <property type="match status" value="1"/>
</dbReference>
<dbReference type="FunFam" id="1.20.810.10:FF:000001">
    <property type="entry name" value="Cytochrome b6"/>
    <property type="match status" value="1"/>
</dbReference>
<dbReference type="Gene3D" id="1.20.810.10">
    <property type="entry name" value="Cytochrome Bc1 Complex, Chain C"/>
    <property type="match status" value="1"/>
</dbReference>
<dbReference type="HAMAP" id="MF_00633">
    <property type="entry name" value="Cytb6_f_cytb6"/>
    <property type="match status" value="1"/>
</dbReference>
<dbReference type="InterPro" id="IPR005797">
    <property type="entry name" value="Cyt_b/b6_N"/>
</dbReference>
<dbReference type="InterPro" id="IPR023530">
    <property type="entry name" value="Cyt_B6_PetB"/>
</dbReference>
<dbReference type="InterPro" id="IPR027387">
    <property type="entry name" value="Cytb/b6-like_sf"/>
</dbReference>
<dbReference type="InterPro" id="IPR048259">
    <property type="entry name" value="Cytochrome_b_N_euk/bac"/>
</dbReference>
<dbReference type="InterPro" id="IPR016174">
    <property type="entry name" value="Di-haem_cyt_TM"/>
</dbReference>
<dbReference type="NCBIfam" id="NF002990">
    <property type="entry name" value="PRK03735.1"/>
    <property type="match status" value="1"/>
</dbReference>
<dbReference type="PANTHER" id="PTHR19271">
    <property type="entry name" value="CYTOCHROME B"/>
    <property type="match status" value="1"/>
</dbReference>
<dbReference type="PANTHER" id="PTHR19271:SF16">
    <property type="entry name" value="CYTOCHROME B"/>
    <property type="match status" value="1"/>
</dbReference>
<dbReference type="Pfam" id="PF00033">
    <property type="entry name" value="Cytochrome_B"/>
    <property type="match status" value="1"/>
</dbReference>
<dbReference type="PIRSF" id="PIRSF000032">
    <property type="entry name" value="Cytochrome_b6"/>
    <property type="match status" value="1"/>
</dbReference>
<dbReference type="SUPFAM" id="SSF81342">
    <property type="entry name" value="Transmembrane di-heme cytochromes"/>
    <property type="match status" value="1"/>
</dbReference>
<dbReference type="PROSITE" id="PS51002">
    <property type="entry name" value="CYTB_NTER"/>
    <property type="match status" value="1"/>
</dbReference>
<reference key="1">
    <citation type="journal article" date="2000" name="DNA Res.">
        <title>Complete structure of the chloroplast genome of a legume, Lotus japonicus.</title>
        <authorList>
            <person name="Kato T."/>
            <person name="Kaneko T."/>
            <person name="Sato S."/>
            <person name="Nakamura Y."/>
            <person name="Tabata S."/>
        </authorList>
    </citation>
    <scope>NUCLEOTIDE SEQUENCE [LARGE SCALE GENOMIC DNA]</scope>
    <source>
        <strain>cv. Miyakojima MG-20</strain>
    </source>
</reference>
<geneLocation type="chloroplast"/>
<name>CYB6_LOTJA</name>
<accession>Q9BBQ6</accession>
<sequence length="215" mass="24116">MSKVYDWFEERLEIQAIADDITSKYVPPHVNIFYCLGGITLTCFLVQVATGFAMTFYYRPTVTEAFASVQYIMTEANFGWLIRSVHRWSASMMVLMMILHVFRVYLTGGFKKPRELTWVTGVVLGVLTASFGVTGYSLPWDQIGYWAVKIVTGVPEAIPVIGSSVVELLRGSASVGQSTLTRFYSLHTFVLPLLTAVFMLMHFSMIRKQGISGPL</sequence>
<organism>
    <name type="scientific">Lotus japonicus</name>
    <name type="common">Lotus corniculatus var. japonicus</name>
    <dbReference type="NCBI Taxonomy" id="34305"/>
    <lineage>
        <taxon>Eukaryota</taxon>
        <taxon>Viridiplantae</taxon>
        <taxon>Streptophyta</taxon>
        <taxon>Embryophyta</taxon>
        <taxon>Tracheophyta</taxon>
        <taxon>Spermatophyta</taxon>
        <taxon>Magnoliopsida</taxon>
        <taxon>eudicotyledons</taxon>
        <taxon>Gunneridae</taxon>
        <taxon>Pentapetalae</taxon>
        <taxon>rosids</taxon>
        <taxon>fabids</taxon>
        <taxon>Fabales</taxon>
        <taxon>Fabaceae</taxon>
        <taxon>Papilionoideae</taxon>
        <taxon>50 kb inversion clade</taxon>
        <taxon>NPAAA clade</taxon>
        <taxon>Hologalegina</taxon>
        <taxon>robinioid clade</taxon>
        <taxon>Loteae</taxon>
        <taxon>Lotus</taxon>
    </lineage>
</organism>
<gene>
    <name evidence="1" type="primary">petB</name>
</gene>
<proteinExistence type="inferred from homology"/>
<keyword id="KW-0150">Chloroplast</keyword>
<keyword id="KW-0249">Electron transport</keyword>
<keyword id="KW-0349">Heme</keyword>
<keyword id="KW-0408">Iron</keyword>
<keyword id="KW-0472">Membrane</keyword>
<keyword id="KW-0479">Metal-binding</keyword>
<keyword id="KW-0602">Photosynthesis</keyword>
<keyword id="KW-0934">Plastid</keyword>
<keyword id="KW-0793">Thylakoid</keyword>
<keyword id="KW-0812">Transmembrane</keyword>
<keyword id="KW-1133">Transmembrane helix</keyword>
<keyword id="KW-0813">Transport</keyword>
<protein>
    <recommendedName>
        <fullName evidence="1">Cytochrome b6</fullName>
    </recommendedName>
</protein>
<evidence type="ECO:0000255" key="1">
    <source>
        <dbReference type="HAMAP-Rule" id="MF_00633"/>
    </source>
</evidence>
<feature type="chain" id="PRO_0000061800" description="Cytochrome b6">
    <location>
        <begin position="1"/>
        <end position="215"/>
    </location>
</feature>
<feature type="transmembrane region" description="Helical" evidence="1">
    <location>
        <begin position="32"/>
        <end position="52"/>
    </location>
</feature>
<feature type="transmembrane region" description="Helical" evidence="1">
    <location>
        <begin position="90"/>
        <end position="110"/>
    </location>
</feature>
<feature type="transmembrane region" description="Helical" evidence="1">
    <location>
        <begin position="116"/>
        <end position="136"/>
    </location>
</feature>
<feature type="transmembrane region" description="Helical" evidence="1">
    <location>
        <begin position="186"/>
        <end position="206"/>
    </location>
</feature>
<feature type="binding site" description="covalent" evidence="1">
    <location>
        <position position="35"/>
    </location>
    <ligand>
        <name>heme c</name>
        <dbReference type="ChEBI" id="CHEBI:61717"/>
    </ligand>
</feature>
<feature type="binding site" description="axial binding residue" evidence="1">
    <location>
        <position position="86"/>
    </location>
    <ligand>
        <name>heme b</name>
        <dbReference type="ChEBI" id="CHEBI:60344"/>
        <label>2</label>
    </ligand>
    <ligandPart>
        <name>Fe</name>
        <dbReference type="ChEBI" id="CHEBI:18248"/>
    </ligandPart>
</feature>
<feature type="binding site" description="axial binding residue" evidence="1">
    <location>
        <position position="100"/>
    </location>
    <ligand>
        <name>heme b</name>
        <dbReference type="ChEBI" id="CHEBI:60344"/>
        <label>1</label>
    </ligand>
    <ligandPart>
        <name>Fe</name>
        <dbReference type="ChEBI" id="CHEBI:18248"/>
    </ligandPart>
</feature>
<feature type="binding site" description="axial binding residue" evidence="1">
    <location>
        <position position="187"/>
    </location>
    <ligand>
        <name>heme b</name>
        <dbReference type="ChEBI" id="CHEBI:60344"/>
        <label>2</label>
    </ligand>
    <ligandPart>
        <name>Fe</name>
        <dbReference type="ChEBI" id="CHEBI:18248"/>
    </ligandPart>
</feature>
<feature type="binding site" description="axial binding residue" evidence="1">
    <location>
        <position position="202"/>
    </location>
    <ligand>
        <name>heme b</name>
        <dbReference type="ChEBI" id="CHEBI:60344"/>
        <label>1</label>
    </ligand>
    <ligandPart>
        <name>Fe</name>
        <dbReference type="ChEBI" id="CHEBI:18248"/>
    </ligandPart>
</feature>